<proteinExistence type="predicted"/>
<feature type="chain" id="PRO_0000087271" description="Putative flagella-related protein E">
    <location>
        <begin position="1"/>
        <end position="140"/>
    </location>
</feature>
<sequence length="140" mass="15892">MGEVFKMDGLASTILEVHKPAKLEDIPDEDPIAIILALKWLEYLCERAGVENVSDILDFYYMLGWLGDKALAKLLKFLKGIKVDEENVVEGSGKLNITDHIISLLFIERLNGKKISAELLDKIEWELRKIKKGAEQFYGI</sequence>
<reference key="1">
    <citation type="journal article" date="1996" name="Science">
        <title>Complete genome sequence of the methanogenic archaeon, Methanococcus jannaschii.</title>
        <authorList>
            <person name="Bult C.J."/>
            <person name="White O."/>
            <person name="Olsen G.J."/>
            <person name="Zhou L."/>
            <person name="Fleischmann R.D."/>
            <person name="Sutton G.G."/>
            <person name="Blake J.A."/>
            <person name="FitzGerald L.M."/>
            <person name="Clayton R.A."/>
            <person name="Gocayne J.D."/>
            <person name="Kerlavage A.R."/>
            <person name="Dougherty B.A."/>
            <person name="Tomb J.-F."/>
            <person name="Adams M.D."/>
            <person name="Reich C.I."/>
            <person name="Overbeek R."/>
            <person name="Kirkness E.F."/>
            <person name="Weinstock K.G."/>
            <person name="Merrick J.M."/>
            <person name="Glodek A."/>
            <person name="Scott J.L."/>
            <person name="Geoghagen N.S.M."/>
            <person name="Weidman J.F."/>
            <person name="Fuhrmann J.L."/>
            <person name="Nguyen D."/>
            <person name="Utterback T.R."/>
            <person name="Kelley J.M."/>
            <person name="Peterson J.D."/>
            <person name="Sadow P.W."/>
            <person name="Hanna M.C."/>
            <person name="Cotton M.D."/>
            <person name="Roberts K.M."/>
            <person name="Hurst M.A."/>
            <person name="Kaine B.P."/>
            <person name="Borodovsky M."/>
            <person name="Klenk H.-P."/>
            <person name="Fraser C.M."/>
            <person name="Smith H.O."/>
            <person name="Woese C.R."/>
            <person name="Venter J.C."/>
        </authorList>
    </citation>
    <scope>NUCLEOTIDE SEQUENCE [LARGE SCALE GENOMIC DNA]</scope>
    <source>
        <strain>ATCC 43067 / DSM 2661 / JAL-1 / JCM 10045 / NBRC 100440</strain>
    </source>
</reference>
<name>FLAE_METJA</name>
<evidence type="ECO:0000305" key="1"/>
<comment type="subcellular location">
    <subcellularLocation>
        <location evidence="1">Archaeal flagellum</location>
    </subcellularLocation>
</comment>
<comment type="similarity">
    <text evidence="1">To M.voltae FlaE, also to FlaD.</text>
</comment>
<dbReference type="EMBL" id="L77117">
    <property type="protein sequence ID" value="AAB98899.1"/>
    <property type="molecule type" value="Genomic_DNA"/>
</dbReference>
<dbReference type="PIR" id="H64411">
    <property type="entry name" value="H64411"/>
</dbReference>
<dbReference type="SMR" id="Q58306"/>
<dbReference type="FunCoup" id="Q58306">
    <property type="interactions" value="1"/>
</dbReference>
<dbReference type="STRING" id="243232.MJ_0896"/>
<dbReference type="PaxDb" id="243232-MJ_0896"/>
<dbReference type="EnsemblBacteria" id="AAB98899">
    <property type="protein sequence ID" value="AAB98899"/>
    <property type="gene ID" value="MJ_0896"/>
</dbReference>
<dbReference type="KEGG" id="mja:MJ_0896"/>
<dbReference type="eggNOG" id="arCOG02964">
    <property type="taxonomic scope" value="Archaea"/>
</dbReference>
<dbReference type="HOGENOM" id="CLU_1881106_0_0_2"/>
<dbReference type="InParanoid" id="Q58306"/>
<dbReference type="PhylomeDB" id="Q58306"/>
<dbReference type="Proteomes" id="UP000000805">
    <property type="component" value="Chromosome"/>
</dbReference>
<dbReference type="GO" id="GO:0097589">
    <property type="term" value="C:archaeal-type flagellum"/>
    <property type="evidence" value="ECO:0007669"/>
    <property type="project" value="UniProtKB-SubCell"/>
</dbReference>
<dbReference type="GO" id="GO:0097588">
    <property type="term" value="P:archaeal or bacterial-type flagellum-dependent cell motility"/>
    <property type="evidence" value="ECO:0007669"/>
    <property type="project" value="InterPro"/>
</dbReference>
<dbReference type="InterPro" id="IPR006752">
    <property type="entry name" value="Arch_fla_DE"/>
</dbReference>
<dbReference type="InterPro" id="IPR052494">
    <property type="entry name" value="Flagella_assembly_related"/>
</dbReference>
<dbReference type="PANTHER" id="PTHR40698:SF1">
    <property type="entry name" value="FLAGELLA-RELATED PROTEIN D-RELATED"/>
    <property type="match status" value="1"/>
</dbReference>
<dbReference type="PANTHER" id="PTHR40698">
    <property type="entry name" value="FLAGELLA-RELATED PROTEIN E-RELATED-RELATED"/>
    <property type="match status" value="1"/>
</dbReference>
<dbReference type="Pfam" id="PF04659">
    <property type="entry name" value="Arch_fla_DE"/>
    <property type="match status" value="1"/>
</dbReference>
<gene>
    <name type="primary">flaE</name>
    <name type="ordered locus">MJ0896</name>
</gene>
<accession>Q58306</accession>
<protein>
    <recommendedName>
        <fullName>Putative flagella-related protein E</fullName>
    </recommendedName>
</protein>
<organism>
    <name type="scientific">Methanocaldococcus jannaschii (strain ATCC 43067 / DSM 2661 / JAL-1 / JCM 10045 / NBRC 100440)</name>
    <name type="common">Methanococcus jannaschii</name>
    <dbReference type="NCBI Taxonomy" id="243232"/>
    <lineage>
        <taxon>Archaea</taxon>
        <taxon>Methanobacteriati</taxon>
        <taxon>Methanobacteriota</taxon>
        <taxon>Methanomada group</taxon>
        <taxon>Methanococci</taxon>
        <taxon>Methanococcales</taxon>
        <taxon>Methanocaldococcaceae</taxon>
        <taxon>Methanocaldococcus</taxon>
    </lineage>
</organism>
<keyword id="KW-0974">Archaeal flagellum</keyword>
<keyword id="KW-1185">Reference proteome</keyword>